<feature type="chain" id="PRO_1000146062" description="Small ribosomal subunit protein uS10">
    <location>
        <begin position="1"/>
        <end position="102"/>
    </location>
</feature>
<accession>B7L0R0</accession>
<sequence length="102" mass="11606">MNGQNIRIRLKAFDHRILDASTKEIVSTARRTGAQIRGPIPLPTHIEKFTVNRSPHIDKKSREQFEMRTHKRVLDIVDPTPQTVDALMKLDLAAGVDVEIKL</sequence>
<keyword id="KW-0687">Ribonucleoprotein</keyword>
<keyword id="KW-0689">Ribosomal protein</keyword>
<name>RS10_METC4</name>
<dbReference type="EMBL" id="CP001298">
    <property type="protein sequence ID" value="ACK83281.1"/>
    <property type="molecule type" value="Genomic_DNA"/>
</dbReference>
<dbReference type="RefSeq" id="WP_003597088.1">
    <property type="nucleotide sequence ID" value="NC_011757.1"/>
</dbReference>
<dbReference type="SMR" id="B7L0R0"/>
<dbReference type="GeneID" id="72989849"/>
<dbReference type="KEGG" id="mch:Mchl_2439"/>
<dbReference type="HOGENOM" id="CLU_122625_1_3_5"/>
<dbReference type="Proteomes" id="UP000002385">
    <property type="component" value="Chromosome"/>
</dbReference>
<dbReference type="GO" id="GO:1990904">
    <property type="term" value="C:ribonucleoprotein complex"/>
    <property type="evidence" value="ECO:0007669"/>
    <property type="project" value="UniProtKB-KW"/>
</dbReference>
<dbReference type="GO" id="GO:0005840">
    <property type="term" value="C:ribosome"/>
    <property type="evidence" value="ECO:0007669"/>
    <property type="project" value="UniProtKB-KW"/>
</dbReference>
<dbReference type="GO" id="GO:0003735">
    <property type="term" value="F:structural constituent of ribosome"/>
    <property type="evidence" value="ECO:0007669"/>
    <property type="project" value="InterPro"/>
</dbReference>
<dbReference type="GO" id="GO:0000049">
    <property type="term" value="F:tRNA binding"/>
    <property type="evidence" value="ECO:0007669"/>
    <property type="project" value="UniProtKB-UniRule"/>
</dbReference>
<dbReference type="GO" id="GO:0006412">
    <property type="term" value="P:translation"/>
    <property type="evidence" value="ECO:0007669"/>
    <property type="project" value="UniProtKB-UniRule"/>
</dbReference>
<dbReference type="FunFam" id="3.30.70.600:FF:000001">
    <property type="entry name" value="30S ribosomal protein S10"/>
    <property type="match status" value="1"/>
</dbReference>
<dbReference type="Gene3D" id="3.30.70.600">
    <property type="entry name" value="Ribosomal protein S10 domain"/>
    <property type="match status" value="1"/>
</dbReference>
<dbReference type="HAMAP" id="MF_00508">
    <property type="entry name" value="Ribosomal_uS10"/>
    <property type="match status" value="1"/>
</dbReference>
<dbReference type="InterPro" id="IPR001848">
    <property type="entry name" value="Ribosomal_uS10"/>
</dbReference>
<dbReference type="InterPro" id="IPR018268">
    <property type="entry name" value="Ribosomal_uS10_CS"/>
</dbReference>
<dbReference type="InterPro" id="IPR027486">
    <property type="entry name" value="Ribosomal_uS10_dom"/>
</dbReference>
<dbReference type="InterPro" id="IPR036838">
    <property type="entry name" value="Ribosomal_uS10_dom_sf"/>
</dbReference>
<dbReference type="NCBIfam" id="NF001861">
    <property type="entry name" value="PRK00596.1"/>
    <property type="match status" value="1"/>
</dbReference>
<dbReference type="NCBIfam" id="TIGR01049">
    <property type="entry name" value="rpsJ_bact"/>
    <property type="match status" value="1"/>
</dbReference>
<dbReference type="PANTHER" id="PTHR11700">
    <property type="entry name" value="30S RIBOSOMAL PROTEIN S10 FAMILY MEMBER"/>
    <property type="match status" value="1"/>
</dbReference>
<dbReference type="Pfam" id="PF00338">
    <property type="entry name" value="Ribosomal_S10"/>
    <property type="match status" value="1"/>
</dbReference>
<dbReference type="PRINTS" id="PR00971">
    <property type="entry name" value="RIBOSOMALS10"/>
</dbReference>
<dbReference type="SMART" id="SM01403">
    <property type="entry name" value="Ribosomal_S10"/>
    <property type="match status" value="1"/>
</dbReference>
<dbReference type="SUPFAM" id="SSF54999">
    <property type="entry name" value="Ribosomal protein S10"/>
    <property type="match status" value="1"/>
</dbReference>
<dbReference type="PROSITE" id="PS00361">
    <property type="entry name" value="RIBOSOMAL_S10"/>
    <property type="match status" value="1"/>
</dbReference>
<comment type="function">
    <text evidence="1">Involved in the binding of tRNA to the ribosomes.</text>
</comment>
<comment type="subunit">
    <text evidence="1">Part of the 30S ribosomal subunit.</text>
</comment>
<comment type="similarity">
    <text evidence="1">Belongs to the universal ribosomal protein uS10 family.</text>
</comment>
<protein>
    <recommendedName>
        <fullName evidence="1">Small ribosomal subunit protein uS10</fullName>
    </recommendedName>
    <alternativeName>
        <fullName evidence="2">30S ribosomal protein S10</fullName>
    </alternativeName>
</protein>
<evidence type="ECO:0000255" key="1">
    <source>
        <dbReference type="HAMAP-Rule" id="MF_00508"/>
    </source>
</evidence>
<evidence type="ECO:0000305" key="2"/>
<reference key="1">
    <citation type="submission" date="2008-12" db="EMBL/GenBank/DDBJ databases">
        <title>Complete sequence of chromosome of Methylobacterium chloromethanicum CM4.</title>
        <authorList>
            <consortium name="US DOE Joint Genome Institute"/>
            <person name="Lucas S."/>
            <person name="Copeland A."/>
            <person name="Lapidus A."/>
            <person name="Glavina del Rio T."/>
            <person name="Dalin E."/>
            <person name="Tice H."/>
            <person name="Bruce D."/>
            <person name="Goodwin L."/>
            <person name="Pitluck S."/>
            <person name="Chertkov O."/>
            <person name="Brettin T."/>
            <person name="Detter J.C."/>
            <person name="Han C."/>
            <person name="Larimer F."/>
            <person name="Land M."/>
            <person name="Hauser L."/>
            <person name="Kyrpides N."/>
            <person name="Mikhailova N."/>
            <person name="Marx C."/>
            <person name="Richardson P."/>
        </authorList>
    </citation>
    <scope>NUCLEOTIDE SEQUENCE [LARGE SCALE GENOMIC DNA]</scope>
    <source>
        <strain>CM4 / NCIMB 13688</strain>
    </source>
</reference>
<organism>
    <name type="scientific">Methylorubrum extorquens (strain CM4 / NCIMB 13688)</name>
    <name type="common">Methylobacterium extorquens</name>
    <dbReference type="NCBI Taxonomy" id="440085"/>
    <lineage>
        <taxon>Bacteria</taxon>
        <taxon>Pseudomonadati</taxon>
        <taxon>Pseudomonadota</taxon>
        <taxon>Alphaproteobacteria</taxon>
        <taxon>Hyphomicrobiales</taxon>
        <taxon>Methylobacteriaceae</taxon>
        <taxon>Methylorubrum</taxon>
    </lineage>
</organism>
<gene>
    <name evidence="1" type="primary">rpsJ</name>
    <name type="ordered locus">Mchl_2439</name>
</gene>
<proteinExistence type="inferred from homology"/>